<accession>Q9ANL0</accession>
<accession>Q79UU8</accession>
<organism>
    <name type="scientific">Bradyrhizobium diazoefficiens (strain JCM 10833 / BCRC 13528 / IAM 13628 / NBRC 14792 / USDA 110)</name>
    <dbReference type="NCBI Taxonomy" id="224911"/>
    <lineage>
        <taxon>Bacteria</taxon>
        <taxon>Pseudomonadati</taxon>
        <taxon>Pseudomonadota</taxon>
        <taxon>Alphaproteobacteria</taxon>
        <taxon>Hyphomicrobiales</taxon>
        <taxon>Nitrobacteraceae</taxon>
        <taxon>Bradyrhizobium</taxon>
    </lineage>
</organism>
<evidence type="ECO:0000250" key="1"/>
<evidence type="ECO:0000255" key="2">
    <source>
        <dbReference type="HAMAP-Rule" id="MF_01676"/>
    </source>
</evidence>
<feature type="chain" id="PRO_0000359473" description="Alkyl hydroperoxide reductase AhpD">
    <location>
        <begin position="1"/>
        <end position="182"/>
    </location>
</feature>
<feature type="active site" description="Proton donor" evidence="2">
    <location>
        <position position="132"/>
    </location>
</feature>
<feature type="active site" description="Cysteine sulfenic acid (-SOH) intermediate" evidence="2">
    <location>
        <position position="135"/>
    </location>
</feature>
<feature type="disulfide bond" evidence="1">
    <location>
        <begin position="132"/>
        <end position="135"/>
    </location>
</feature>
<feature type="disulfide bond" description="Interchain (with AhpC); in linked form" evidence="2">
    <location>
        <position position="135"/>
    </location>
</feature>
<protein>
    <recommendedName>
        <fullName evidence="2">Alkyl hydroperoxide reductase AhpD</fullName>
        <ecNumber evidence="2">1.11.1.28</ecNumber>
    </recommendedName>
    <alternativeName>
        <fullName evidence="2">Alkylhydroperoxidase AhpD</fullName>
    </alternativeName>
</protein>
<gene>
    <name evidence="2" type="primary">ahpD</name>
    <name type="ordered locus">bll1776</name>
    <name type="ORF">id138</name>
</gene>
<comment type="function">
    <text evidence="2">Antioxidant protein with alkyl hydroperoxidase activity. Required for the reduction of the AhpC active site cysteine residues and for the regeneration of the AhpC enzyme activity.</text>
</comment>
<comment type="catalytic activity">
    <reaction evidence="2">
        <text>N(6)-[(R)-dihydrolipoyl]-L-lysyl-[lipoyl-carrier protein] + a hydroperoxide = N(6)-[(R)-lipoyl]-L-lysyl-[lipoyl-carrier protein] + an alcohol + H2O</text>
        <dbReference type="Rhea" id="RHEA:62636"/>
        <dbReference type="Rhea" id="RHEA-COMP:10502"/>
        <dbReference type="Rhea" id="RHEA-COMP:16355"/>
        <dbReference type="ChEBI" id="CHEBI:15377"/>
        <dbReference type="ChEBI" id="CHEBI:30879"/>
        <dbReference type="ChEBI" id="CHEBI:35924"/>
        <dbReference type="ChEBI" id="CHEBI:83099"/>
        <dbReference type="ChEBI" id="CHEBI:83100"/>
        <dbReference type="EC" id="1.11.1.28"/>
    </reaction>
</comment>
<comment type="similarity">
    <text evidence="2">Belongs to the AhpD family.</text>
</comment>
<sequence>MSPIEQIYDKIPDFAKDVRINLTSLMADETLSPRRKYGVLVASAVATRNSALIAAVESAASGVMTSVAIAAAKAAASVVVMNNVYYRFVHLASNPEYKTMPPRLRMDVIGNPGVDKSDFELWSLAVSSINGCGICIDAHERTLRAAGVNSETIQTAVRFAAITQSVAIALEAAGPASPQAGD</sequence>
<keyword id="KW-0049">Antioxidant</keyword>
<keyword id="KW-1015">Disulfide bond</keyword>
<keyword id="KW-0560">Oxidoreductase</keyword>
<keyword id="KW-0575">Peroxidase</keyword>
<keyword id="KW-0676">Redox-active center</keyword>
<keyword id="KW-1185">Reference proteome</keyword>
<dbReference type="EC" id="1.11.1.28" evidence="2"/>
<dbReference type="EMBL" id="AH010242">
    <property type="protein sequence ID" value="AAG60760.1"/>
    <property type="molecule type" value="Genomic_DNA"/>
</dbReference>
<dbReference type="EMBL" id="BA000040">
    <property type="protein sequence ID" value="BAC47041.1"/>
    <property type="molecule type" value="Genomic_DNA"/>
</dbReference>
<dbReference type="RefSeq" id="NP_768416.1">
    <property type="nucleotide sequence ID" value="NC_004463.1"/>
</dbReference>
<dbReference type="RefSeq" id="WP_011084585.1">
    <property type="nucleotide sequence ID" value="NZ_CP011360.1"/>
</dbReference>
<dbReference type="SMR" id="Q9ANL0"/>
<dbReference type="STRING" id="224911.AAV28_05805"/>
<dbReference type="PeroxiBase" id="4608">
    <property type="entry name" value="BjaAhpD"/>
</dbReference>
<dbReference type="EnsemblBacteria" id="BAC47041">
    <property type="protein sequence ID" value="BAC47041"/>
    <property type="gene ID" value="BAC47041"/>
</dbReference>
<dbReference type="KEGG" id="bja:bll1776"/>
<dbReference type="PATRIC" id="fig|224911.44.peg.1244"/>
<dbReference type="eggNOG" id="COG2128">
    <property type="taxonomic scope" value="Bacteria"/>
</dbReference>
<dbReference type="HOGENOM" id="CLU_105328_0_0_5"/>
<dbReference type="InParanoid" id="Q9ANL0"/>
<dbReference type="OrthoDB" id="9801997at2"/>
<dbReference type="PhylomeDB" id="Q9ANL0"/>
<dbReference type="Proteomes" id="UP000002526">
    <property type="component" value="Chromosome"/>
</dbReference>
<dbReference type="GO" id="GO:0008785">
    <property type="term" value="F:alkyl hydroperoxide reductase activity"/>
    <property type="evidence" value="ECO:0007669"/>
    <property type="project" value="UniProtKB-UniRule"/>
</dbReference>
<dbReference type="GO" id="GO:0015036">
    <property type="term" value="F:disulfide oxidoreductase activity"/>
    <property type="evidence" value="ECO:0000318"/>
    <property type="project" value="GO_Central"/>
</dbReference>
<dbReference type="GO" id="GO:0032843">
    <property type="term" value="F:hydroperoxide reductase activity"/>
    <property type="evidence" value="ECO:0000318"/>
    <property type="project" value="GO_Central"/>
</dbReference>
<dbReference type="GO" id="GO:0051920">
    <property type="term" value="F:peroxiredoxin activity"/>
    <property type="evidence" value="ECO:0007669"/>
    <property type="project" value="InterPro"/>
</dbReference>
<dbReference type="GO" id="GO:0045454">
    <property type="term" value="P:cell redox homeostasis"/>
    <property type="evidence" value="ECO:0000318"/>
    <property type="project" value="GO_Central"/>
</dbReference>
<dbReference type="GO" id="GO:0006979">
    <property type="term" value="P:response to oxidative stress"/>
    <property type="evidence" value="ECO:0007669"/>
    <property type="project" value="InterPro"/>
</dbReference>
<dbReference type="Gene3D" id="1.20.1290.10">
    <property type="entry name" value="AhpD-like"/>
    <property type="match status" value="1"/>
</dbReference>
<dbReference type="HAMAP" id="MF_01676">
    <property type="entry name" value="AhpD"/>
    <property type="match status" value="1"/>
</dbReference>
<dbReference type="InterPro" id="IPR004674">
    <property type="entry name" value="AhpD"/>
</dbReference>
<dbReference type="InterPro" id="IPR029032">
    <property type="entry name" value="AhpD-like"/>
</dbReference>
<dbReference type="InterPro" id="IPR004675">
    <property type="entry name" value="AhpD_core"/>
</dbReference>
<dbReference type="InterPro" id="IPR003779">
    <property type="entry name" value="CMD-like"/>
</dbReference>
<dbReference type="NCBIfam" id="TIGR00777">
    <property type="entry name" value="ahpD"/>
    <property type="match status" value="1"/>
</dbReference>
<dbReference type="NCBIfam" id="TIGR00778">
    <property type="entry name" value="ahpD_dom"/>
    <property type="match status" value="1"/>
</dbReference>
<dbReference type="PANTHER" id="PTHR33930">
    <property type="entry name" value="ALKYL HYDROPEROXIDE REDUCTASE AHPD"/>
    <property type="match status" value="1"/>
</dbReference>
<dbReference type="PANTHER" id="PTHR33930:SF7">
    <property type="entry name" value="ALKYL HYDROPEROXIDE REDUCTASE AHPD"/>
    <property type="match status" value="1"/>
</dbReference>
<dbReference type="Pfam" id="PF02627">
    <property type="entry name" value="CMD"/>
    <property type="match status" value="1"/>
</dbReference>
<dbReference type="SUPFAM" id="SSF69118">
    <property type="entry name" value="AhpD-like"/>
    <property type="match status" value="1"/>
</dbReference>
<proteinExistence type="inferred from homology"/>
<reference key="1">
    <citation type="journal article" date="2001" name="J. Bacteriol.">
        <title>Potential symbiosis-specific genes uncovered by sequencing a 410-kb DNA region of the Bradyrhizobium japonicum chromosome.</title>
        <authorList>
            <person name="Goettfert M."/>
            <person name="Roethlisberger S."/>
            <person name="Kuendig C."/>
            <person name="Beck C."/>
            <person name="Marty R."/>
            <person name="Hennecke H."/>
        </authorList>
    </citation>
    <scope>NUCLEOTIDE SEQUENCE [GENOMIC DNA]</scope>
    <source>
        <strain>USDA 110spc4</strain>
    </source>
</reference>
<reference key="2">
    <citation type="journal article" date="2002" name="DNA Res.">
        <title>Complete genomic sequence of nitrogen-fixing symbiotic bacterium Bradyrhizobium japonicum USDA110.</title>
        <authorList>
            <person name="Kaneko T."/>
            <person name="Nakamura Y."/>
            <person name="Sato S."/>
            <person name="Minamisawa K."/>
            <person name="Uchiumi T."/>
            <person name="Sasamoto S."/>
            <person name="Watanabe A."/>
            <person name="Idesawa K."/>
            <person name="Iriguchi M."/>
            <person name="Kawashima K."/>
            <person name="Kohara M."/>
            <person name="Matsumoto M."/>
            <person name="Shimpo S."/>
            <person name="Tsuruoka H."/>
            <person name="Wada T."/>
            <person name="Yamada M."/>
            <person name="Tabata S."/>
        </authorList>
    </citation>
    <scope>NUCLEOTIDE SEQUENCE [LARGE SCALE GENOMIC DNA]</scope>
    <source>
        <strain>JCM 10833 / BCRC 13528 / IAM 13628 / NBRC 14792 / USDA 110</strain>
    </source>
</reference>
<name>AHPD_BRADU</name>